<feature type="chain" id="PRO_0000181116" description="Large ribosomal subunit protein bL27">
    <location>
        <begin position="1"/>
        <end position="85"/>
    </location>
</feature>
<feature type="region of interest" description="Disordered" evidence="2">
    <location>
        <begin position="1"/>
        <end position="20"/>
    </location>
</feature>
<sequence length="85" mass="9112">MATKKAGGSTRNGRDSEAKRLGVKRFGGESVLAGSIIVRQRGTKFHAGSNVGMGRDHTLFATADGKVKFEVKGEKSRKYVSIVTE</sequence>
<accession>Q65S55</accession>
<dbReference type="EMBL" id="AE016827">
    <property type="protein sequence ID" value="AAU38205.1"/>
    <property type="molecule type" value="Genomic_DNA"/>
</dbReference>
<dbReference type="RefSeq" id="WP_005760959.1">
    <property type="nucleotide sequence ID" value="NC_006300.1"/>
</dbReference>
<dbReference type="SMR" id="Q65S55"/>
<dbReference type="STRING" id="221988.MS1598"/>
<dbReference type="GeneID" id="85658553"/>
<dbReference type="GeneID" id="93226345"/>
<dbReference type="KEGG" id="msu:MS1598"/>
<dbReference type="eggNOG" id="COG0211">
    <property type="taxonomic scope" value="Bacteria"/>
</dbReference>
<dbReference type="HOGENOM" id="CLU_095424_4_1_6"/>
<dbReference type="OrthoDB" id="9803474at2"/>
<dbReference type="Proteomes" id="UP000000607">
    <property type="component" value="Chromosome"/>
</dbReference>
<dbReference type="GO" id="GO:0022625">
    <property type="term" value="C:cytosolic large ribosomal subunit"/>
    <property type="evidence" value="ECO:0007669"/>
    <property type="project" value="TreeGrafter"/>
</dbReference>
<dbReference type="GO" id="GO:0003735">
    <property type="term" value="F:structural constituent of ribosome"/>
    <property type="evidence" value="ECO:0007669"/>
    <property type="project" value="InterPro"/>
</dbReference>
<dbReference type="GO" id="GO:0006412">
    <property type="term" value="P:translation"/>
    <property type="evidence" value="ECO:0007669"/>
    <property type="project" value="UniProtKB-UniRule"/>
</dbReference>
<dbReference type="FunFam" id="2.40.50.100:FF:000001">
    <property type="entry name" value="50S ribosomal protein L27"/>
    <property type="match status" value="1"/>
</dbReference>
<dbReference type="Gene3D" id="2.40.50.100">
    <property type="match status" value="1"/>
</dbReference>
<dbReference type="HAMAP" id="MF_00539">
    <property type="entry name" value="Ribosomal_bL27"/>
    <property type="match status" value="1"/>
</dbReference>
<dbReference type="InterPro" id="IPR001684">
    <property type="entry name" value="Ribosomal_bL27"/>
</dbReference>
<dbReference type="InterPro" id="IPR018261">
    <property type="entry name" value="Ribosomal_bL27_CS"/>
</dbReference>
<dbReference type="NCBIfam" id="TIGR00062">
    <property type="entry name" value="L27"/>
    <property type="match status" value="1"/>
</dbReference>
<dbReference type="PANTHER" id="PTHR15893:SF0">
    <property type="entry name" value="LARGE RIBOSOMAL SUBUNIT PROTEIN BL27M"/>
    <property type="match status" value="1"/>
</dbReference>
<dbReference type="PANTHER" id="PTHR15893">
    <property type="entry name" value="RIBOSOMAL PROTEIN L27"/>
    <property type="match status" value="1"/>
</dbReference>
<dbReference type="Pfam" id="PF01016">
    <property type="entry name" value="Ribosomal_L27"/>
    <property type="match status" value="1"/>
</dbReference>
<dbReference type="PRINTS" id="PR00063">
    <property type="entry name" value="RIBOSOMALL27"/>
</dbReference>
<dbReference type="SUPFAM" id="SSF110324">
    <property type="entry name" value="Ribosomal L27 protein-like"/>
    <property type="match status" value="1"/>
</dbReference>
<dbReference type="PROSITE" id="PS00831">
    <property type="entry name" value="RIBOSOMAL_L27"/>
    <property type="match status" value="1"/>
</dbReference>
<name>RL27_MANSM</name>
<organism>
    <name type="scientific">Mannheimia succiniciproducens (strain KCTC 0769BP / MBEL55E)</name>
    <dbReference type="NCBI Taxonomy" id="221988"/>
    <lineage>
        <taxon>Bacteria</taxon>
        <taxon>Pseudomonadati</taxon>
        <taxon>Pseudomonadota</taxon>
        <taxon>Gammaproteobacteria</taxon>
        <taxon>Pasteurellales</taxon>
        <taxon>Pasteurellaceae</taxon>
        <taxon>Basfia</taxon>
    </lineage>
</organism>
<reference key="1">
    <citation type="journal article" date="2004" name="Nat. Biotechnol.">
        <title>The genome sequence of the capnophilic rumen bacterium Mannheimia succiniciproducens.</title>
        <authorList>
            <person name="Hong S.H."/>
            <person name="Kim J.S."/>
            <person name="Lee S.Y."/>
            <person name="In Y.H."/>
            <person name="Choi S.S."/>
            <person name="Rih J.-K."/>
            <person name="Kim C.H."/>
            <person name="Jeong H."/>
            <person name="Hur C.G."/>
            <person name="Kim J.J."/>
        </authorList>
    </citation>
    <scope>NUCLEOTIDE SEQUENCE [LARGE SCALE GENOMIC DNA]</scope>
    <source>
        <strain>KCTC 0769BP / MBEL55E</strain>
    </source>
</reference>
<keyword id="KW-0687">Ribonucleoprotein</keyword>
<keyword id="KW-0689">Ribosomal protein</keyword>
<protein>
    <recommendedName>
        <fullName evidence="1">Large ribosomal subunit protein bL27</fullName>
    </recommendedName>
    <alternativeName>
        <fullName evidence="3">50S ribosomal protein L27</fullName>
    </alternativeName>
</protein>
<gene>
    <name evidence="1" type="primary">rpmA</name>
    <name type="ordered locus">MS1598</name>
</gene>
<comment type="similarity">
    <text evidence="1">Belongs to the bacterial ribosomal protein bL27 family.</text>
</comment>
<evidence type="ECO:0000255" key="1">
    <source>
        <dbReference type="HAMAP-Rule" id="MF_00539"/>
    </source>
</evidence>
<evidence type="ECO:0000256" key="2">
    <source>
        <dbReference type="SAM" id="MobiDB-lite"/>
    </source>
</evidence>
<evidence type="ECO:0000305" key="3"/>
<proteinExistence type="inferred from homology"/>